<evidence type="ECO:0000255" key="1"/>
<evidence type="ECO:0000269" key="2">
    <source>
    </source>
</evidence>
<gene>
    <name type="primary">papF</name>
</gene>
<comment type="function">
    <text evidence="2">Adapter that links the PapG adhesin to the distal end of the tip fibrillum. PapF is required for the correct presentation of the adhesin at the distal end of the tip fibrillum. Pili are polar filaments radiating from the surface of the bacterium to a length of 0.5-1.5 micrometers and numbering 100-300 per cell, and enable bacteria to colonize the epithelium of specific host organs.</text>
</comment>
<comment type="interaction">
    <interactant intactId="EBI-15725486">
        <id>P08408</id>
    </interactant>
    <interactant intactId="EBI-1034993">
        <id>P15319</id>
        <label>papD</label>
    </interactant>
    <organismsDiffer>false</organismsDiffer>
    <experiments>5</experiments>
</comment>
<comment type="subcellular location">
    <subcellularLocation>
        <location>Secreted</location>
    </subcellularLocation>
    <subcellularLocation>
        <location>Fimbrium</location>
    </subcellularLocation>
    <text>At the tip of the pili.</text>
</comment>
<comment type="miscellaneous">
    <text>Strains of E.coli that cause infection of the human urinary tract produce pap-pili which are hair-like appendages consisting of about 1000 helically arranged subunits of the protein PapA. These pili mediate binding to digalactoside-containing glycolipids present on the epithelial cells which line the urinary tract.</text>
</comment>
<accession>P08408</accession>
<keyword id="KW-0130">Cell adhesion</keyword>
<keyword id="KW-0281">Fimbrium</keyword>
<keyword id="KW-0964">Secreted</keyword>
<keyword id="KW-0732">Signal</keyword>
<reference key="1">
    <citation type="journal article" date="1986" name="Proc. Natl. Acad. Sci. U.S.A.">
        <title>Gene products specifying adhesion of uropathogenic Escherichia coli are minor components of pili.</title>
        <authorList>
            <person name="Lindberg F."/>
            <person name="Lund B."/>
            <person name="Normark S."/>
        </authorList>
    </citation>
    <scope>NUCLEOTIDE SEQUENCE [GENOMIC DNA]</scope>
    <source>
        <strain>ATCC 700336 / J96 / UPEC</strain>
    </source>
</reference>
<reference key="2">
    <citation type="journal article" date="1988" name="J. Bacteriol.">
        <title>Structure and antigenic properties of the tip-located P pilus proteins of uropathogenic Escherichia coli.</title>
        <authorList>
            <person name="Lund B."/>
            <person name="Lindberg F."/>
            <person name="Normark S."/>
        </authorList>
    </citation>
    <scope>NUCLEOTIDE SEQUENCE [GENOMIC DNA]</scope>
    <source>
        <strain>ATCC 700336 / J96 / UPEC</strain>
    </source>
</reference>
<reference key="3">
    <citation type="journal article" date="1992" name="Mol. Microbiol.">
        <title>Horizontal gene transfer of the Escherichia coli pap and prs pili operons as a mechanism for the development of tissue-specific adhesive properties.</title>
        <authorList>
            <person name="Marklund B.-I."/>
            <person name="Tennent J.M."/>
            <person name="Garcia E."/>
            <person name="Hamers A."/>
            <person name="Baga M."/>
            <person name="Lindberg F."/>
            <person name="Gaastra W."/>
            <person name="Normark S."/>
        </authorList>
    </citation>
    <scope>NUCLEOTIDE SEQUENCE [GENOMIC DNA]</scope>
    <source>
        <strain>ATCC 700336 / J96 / UPEC</strain>
    </source>
</reference>
<reference key="4">
    <citation type="journal article" date="1993" name="EMBO J.">
        <title>Initiation of assembly and association of the structural elements of a bacterial pilus depend on two specialized tip proteins.</title>
        <authorList>
            <person name="Jacob-Dubuisson F."/>
            <person name="Heuser J."/>
            <person name="Dodson K."/>
            <person name="Normark S."/>
            <person name="Hultgren S."/>
        </authorList>
    </citation>
    <scope>FUNCTION</scope>
</reference>
<reference key="5">
    <citation type="journal article" date="1998" name="J. Struct. Biol.">
        <title>Pilus biogenesis via the chaperone/usher pathway: an integration of structure and function.</title>
        <authorList>
            <person name="Hung D.L."/>
            <person name="Hultgren S.J."/>
        </authorList>
    </citation>
    <scope>REVIEW</scope>
</reference>
<feature type="signal peptide" evidence="1">
    <location>
        <begin position="1"/>
        <end position="18"/>
    </location>
</feature>
<feature type="chain" id="PRO_0000022004" description="Fimbrial adapter PapF">
    <location>
        <begin position="19"/>
        <end position="167"/>
    </location>
</feature>
<proteinExistence type="evidence at protein level"/>
<organism>
    <name type="scientific">Escherichia coli</name>
    <dbReference type="NCBI Taxonomy" id="562"/>
    <lineage>
        <taxon>Bacteria</taxon>
        <taxon>Pseudomonadati</taxon>
        <taxon>Pseudomonadota</taxon>
        <taxon>Gammaproteobacteria</taxon>
        <taxon>Enterobacterales</taxon>
        <taxon>Enterobacteriaceae</taxon>
        <taxon>Escherichia</taxon>
    </lineage>
</organism>
<protein>
    <recommendedName>
        <fullName>Fimbrial adapter PapF</fullName>
    </recommendedName>
</protein>
<dbReference type="EMBL" id="M13239">
    <property type="protein sequence ID" value="AAA24281.1"/>
    <property type="molecule type" value="Genomic_DNA"/>
</dbReference>
<dbReference type="EMBL" id="M20146">
    <property type="protein sequence ID" value="AAA24289.1"/>
    <property type="molecule type" value="Genomic_DNA"/>
</dbReference>
<dbReference type="EMBL" id="X61239">
    <property type="protein sequence ID" value="CAA43569.1"/>
    <property type="molecule type" value="Genomic_DNA"/>
</dbReference>
<dbReference type="PIR" id="B25134">
    <property type="entry name" value="YQECPF"/>
</dbReference>
<dbReference type="RefSeq" id="WP_042092232.1">
    <property type="nucleotide sequence ID" value="NZ_CP069517.1"/>
</dbReference>
<dbReference type="SMR" id="P08408"/>
<dbReference type="DIP" id="DIP-46336N"/>
<dbReference type="IntAct" id="P08408">
    <property type="interactions" value="3"/>
</dbReference>
<dbReference type="GO" id="GO:0005576">
    <property type="term" value="C:extracellular region"/>
    <property type="evidence" value="ECO:0007669"/>
    <property type="project" value="UniProtKB-SubCell"/>
</dbReference>
<dbReference type="GO" id="GO:0009289">
    <property type="term" value="C:pilus"/>
    <property type="evidence" value="ECO:0007669"/>
    <property type="project" value="UniProtKB-SubCell"/>
</dbReference>
<dbReference type="GO" id="GO:0043709">
    <property type="term" value="P:cell adhesion involved in single-species biofilm formation"/>
    <property type="evidence" value="ECO:0007669"/>
    <property type="project" value="TreeGrafter"/>
</dbReference>
<dbReference type="Gene3D" id="2.60.40.1090">
    <property type="entry name" value="Fimbrial-type adhesion domain"/>
    <property type="match status" value="1"/>
</dbReference>
<dbReference type="InterPro" id="IPR000259">
    <property type="entry name" value="Adhesion_dom_fimbrial"/>
</dbReference>
<dbReference type="InterPro" id="IPR036937">
    <property type="entry name" value="Adhesion_dom_fimbrial_sf"/>
</dbReference>
<dbReference type="InterPro" id="IPR008966">
    <property type="entry name" value="Adhesion_dom_sf"/>
</dbReference>
<dbReference type="InterPro" id="IPR050263">
    <property type="entry name" value="Bact_Fimbrial_Adh_Pro"/>
</dbReference>
<dbReference type="InterPro" id="IPR005430">
    <property type="entry name" value="P_pili_tip_PapF"/>
</dbReference>
<dbReference type="PANTHER" id="PTHR33420:SF26">
    <property type="entry name" value="FIMBRIAL SUBUNIT"/>
    <property type="match status" value="1"/>
</dbReference>
<dbReference type="PANTHER" id="PTHR33420">
    <property type="entry name" value="FIMBRIAL SUBUNIT ELFA-RELATED"/>
    <property type="match status" value="1"/>
</dbReference>
<dbReference type="Pfam" id="PF00419">
    <property type="entry name" value="Fimbrial"/>
    <property type="match status" value="1"/>
</dbReference>
<dbReference type="PRINTS" id="PR01613">
    <property type="entry name" value="FIMBRIALPAPF"/>
</dbReference>
<dbReference type="SUPFAM" id="SSF49401">
    <property type="entry name" value="Bacterial adhesins"/>
    <property type="match status" value="1"/>
</dbReference>
<sequence>MIRLSLFISLLLTSVAVLADVQINIRGNVYIPPCTINNGQNIVVDFGNINPEHVDNSRGEVTKTISISCPYKSGSLWIKVTGNTMGGGQNNVLATNITHFGIALYQGKGMSTPLILGNGSGNGYGVTAGLDTARSTFTFTSVPFRNGSGILNGGDFQTTASMSMIYN</sequence>
<name>PAPF_ECOLX</name>